<proteinExistence type="inferred from homology"/>
<organism>
    <name type="scientific">Salmonella paratyphi C (strain RKS4594)</name>
    <dbReference type="NCBI Taxonomy" id="476213"/>
    <lineage>
        <taxon>Bacteria</taxon>
        <taxon>Pseudomonadati</taxon>
        <taxon>Pseudomonadota</taxon>
        <taxon>Gammaproteobacteria</taxon>
        <taxon>Enterobacterales</taxon>
        <taxon>Enterobacteriaceae</taxon>
        <taxon>Salmonella</taxon>
    </lineage>
</organism>
<keyword id="KW-0963">Cytoplasm</keyword>
<name>YAFD_SALPC</name>
<comment type="subcellular location">
    <subcellularLocation>
        <location evidence="1">Cytoplasm</location>
    </subcellularLocation>
</comment>
<comment type="similarity">
    <text evidence="1">Belongs to the UPF0294 family.</text>
</comment>
<accession>C0Q6M7</accession>
<feature type="chain" id="PRO_1000164043" description="UPF0294 protein YafD">
    <location>
        <begin position="1"/>
        <end position="266"/>
    </location>
</feature>
<gene>
    <name evidence="1" type="primary">yafD</name>
    <name type="ordered locus">SPC_0268</name>
</gene>
<sequence length="266" mass="29934">MRKNTYAMRYVAGQPAERILPPGSFASIGQALPAGEPLSSEERIRILVWNIFKQQRAEWLSVLKNYGKDAHLVLLQEAQTTPELVQFATANYLAADQVPAFVLPQHPSGVMTLSAAHPVYCCPLREREPILRLAKSALVTVYPLPDTRLLMVVNVHAVNFSLGVDVYSKQLLPIGDQIAHHSGPVIMAGDFNTWSRPRMNALYRFAREMSLRQVRFTDDQRRRAFGRPLDFVFYRGLNVNEASVLVTRASDHNPLLVEFSPGKPEQ</sequence>
<protein>
    <recommendedName>
        <fullName evidence="1">UPF0294 protein YafD</fullName>
    </recommendedName>
</protein>
<evidence type="ECO:0000255" key="1">
    <source>
        <dbReference type="HAMAP-Rule" id="MF_01119"/>
    </source>
</evidence>
<dbReference type="EMBL" id="CP000857">
    <property type="protein sequence ID" value="ACN44456.1"/>
    <property type="molecule type" value="Genomic_DNA"/>
</dbReference>
<dbReference type="RefSeq" id="WP_001230974.1">
    <property type="nucleotide sequence ID" value="NC_012125.1"/>
</dbReference>
<dbReference type="SMR" id="C0Q6M7"/>
<dbReference type="KEGG" id="sei:SPC_0268"/>
<dbReference type="HOGENOM" id="CLU_083563_0_0_6"/>
<dbReference type="Proteomes" id="UP000001599">
    <property type="component" value="Chromosome"/>
</dbReference>
<dbReference type="GO" id="GO:0005737">
    <property type="term" value="C:cytoplasm"/>
    <property type="evidence" value="ECO:0007669"/>
    <property type="project" value="UniProtKB-SubCell"/>
</dbReference>
<dbReference type="GO" id="GO:0003824">
    <property type="term" value="F:catalytic activity"/>
    <property type="evidence" value="ECO:0007669"/>
    <property type="project" value="InterPro"/>
</dbReference>
<dbReference type="Gene3D" id="3.60.10.10">
    <property type="entry name" value="Endonuclease/exonuclease/phosphatase"/>
    <property type="match status" value="1"/>
</dbReference>
<dbReference type="HAMAP" id="MF_01119">
    <property type="entry name" value="UPF0294"/>
    <property type="match status" value="1"/>
</dbReference>
<dbReference type="InterPro" id="IPR036691">
    <property type="entry name" value="Endo/exonu/phosph_ase_sf"/>
</dbReference>
<dbReference type="InterPro" id="IPR005135">
    <property type="entry name" value="Endo/exonuclease/phosphatase"/>
</dbReference>
<dbReference type="InterPro" id="IPR022958">
    <property type="entry name" value="UPF0294"/>
</dbReference>
<dbReference type="NCBIfam" id="NF003839">
    <property type="entry name" value="PRK05421.1-1"/>
    <property type="match status" value="1"/>
</dbReference>
<dbReference type="NCBIfam" id="NF003840">
    <property type="entry name" value="PRK05421.1-2"/>
    <property type="match status" value="1"/>
</dbReference>
<dbReference type="NCBIfam" id="NF003841">
    <property type="entry name" value="PRK05421.1-3"/>
    <property type="match status" value="1"/>
</dbReference>
<dbReference type="NCBIfam" id="NF003842">
    <property type="entry name" value="PRK05421.1-4"/>
    <property type="match status" value="1"/>
</dbReference>
<dbReference type="Pfam" id="PF03372">
    <property type="entry name" value="Exo_endo_phos"/>
    <property type="match status" value="1"/>
</dbReference>
<dbReference type="SUPFAM" id="SSF56219">
    <property type="entry name" value="DNase I-like"/>
    <property type="match status" value="1"/>
</dbReference>
<reference key="1">
    <citation type="journal article" date="2009" name="PLoS ONE">
        <title>Salmonella paratyphi C: genetic divergence from Salmonella choleraesuis and pathogenic convergence with Salmonella typhi.</title>
        <authorList>
            <person name="Liu W.-Q."/>
            <person name="Feng Y."/>
            <person name="Wang Y."/>
            <person name="Zou Q.-H."/>
            <person name="Chen F."/>
            <person name="Guo J.-T."/>
            <person name="Peng Y.-H."/>
            <person name="Jin Y."/>
            <person name="Li Y.-G."/>
            <person name="Hu S.-N."/>
            <person name="Johnston R.N."/>
            <person name="Liu G.-R."/>
            <person name="Liu S.-L."/>
        </authorList>
    </citation>
    <scope>NUCLEOTIDE SEQUENCE [LARGE SCALE GENOMIC DNA]</scope>
    <source>
        <strain>RKS4594</strain>
    </source>
</reference>